<gene>
    <name evidence="4" type="primary">HDA8</name>
    <name evidence="7" type="ordered locus">At1g08460</name>
    <name evidence="6" type="ORF">T27G7.14</name>
    <name type="ORF">T27G7_7</name>
</gene>
<comment type="function">
    <text evidence="2">Responsible for the deacetylation of lysine residues on the N-terminal part of the core histones (H2A, H2B, H3 and H4). Histone deacetylation gives a tag for epigenetic repression and plays an important role in transcriptional regulation, cell cycle progression and developmental events. Histone deacetylases act via the formation of large multiprotein complexes.</text>
</comment>
<comment type="catalytic activity">
    <reaction evidence="2">
        <text>N(6)-acetyl-L-lysyl-[histone] + H2O = L-lysyl-[histone] + acetate</text>
        <dbReference type="Rhea" id="RHEA:58196"/>
        <dbReference type="Rhea" id="RHEA-COMP:9845"/>
        <dbReference type="Rhea" id="RHEA-COMP:11338"/>
        <dbReference type="ChEBI" id="CHEBI:15377"/>
        <dbReference type="ChEBI" id="CHEBI:29969"/>
        <dbReference type="ChEBI" id="CHEBI:30089"/>
        <dbReference type="ChEBI" id="CHEBI:61930"/>
        <dbReference type="EC" id="3.5.1.98"/>
    </reaction>
    <physiologicalReaction direction="left-to-right" evidence="2">
        <dbReference type="Rhea" id="RHEA:58197"/>
    </physiologicalReaction>
</comment>
<comment type="cofactor">
    <cofactor evidence="1">
        <name>Zn(2+)</name>
        <dbReference type="ChEBI" id="CHEBI:29105"/>
    </cofactor>
    <text evidence="1">Binds 1 zinc ion per subunit.</text>
</comment>
<comment type="subcellular location">
    <subcellularLocation>
        <location evidence="3">Nucleus</location>
    </subcellularLocation>
    <subcellularLocation>
        <location evidence="3">Cytoplasm</location>
    </subcellularLocation>
</comment>
<comment type="tissue specificity">
    <text evidence="3">Expressed in stems, leaves, flowers, siliques and mature seeds.</text>
</comment>
<comment type="similarity">
    <text evidence="5">Belongs to the histone deacetylase family.</text>
</comment>
<comment type="sequence caution" evidence="5">
    <conflict type="erroneous gene model prediction">
        <sequence resource="EMBL-CDS" id="AAF22892"/>
    </conflict>
</comment>
<comment type="sequence caution" evidence="5">
    <conflict type="erroneous initiation">
        <sequence resource="EMBL-CDS" id="AAL16299"/>
    </conflict>
    <text>Truncated N-terminus.</text>
</comment>
<feature type="chain" id="PRO_0000280087" description="Histone deacetylase 8">
    <location>
        <begin position="1"/>
        <end position="377"/>
    </location>
</feature>
<feature type="region of interest" description="Histone deacetylase">
    <location>
        <begin position="5"/>
        <end position="336"/>
    </location>
</feature>
<feature type="active site" description="Proton donor/acceptor" evidence="1">
    <location>
        <position position="145"/>
    </location>
</feature>
<feature type="binding site" evidence="1">
    <location>
        <position position="182"/>
    </location>
    <ligand>
        <name>Zn(2+)</name>
        <dbReference type="ChEBI" id="CHEBI:29105"/>
    </ligand>
</feature>
<feature type="binding site" evidence="1">
    <location>
        <position position="184"/>
    </location>
    <ligand>
        <name>Zn(2+)</name>
        <dbReference type="ChEBI" id="CHEBI:29105"/>
    </ligand>
</feature>
<feature type="binding site" evidence="1">
    <location>
        <position position="274"/>
    </location>
    <ligand>
        <name>Zn(2+)</name>
        <dbReference type="ChEBI" id="CHEBI:29105"/>
    </ligand>
</feature>
<feature type="site" description="Polarizes the scissile carbonyl of the substrate" evidence="1">
    <location>
        <position position="318"/>
    </location>
</feature>
<protein>
    <recommendedName>
        <fullName evidence="4">Histone deacetylase 8</fullName>
        <ecNumber evidence="2">3.5.1.98</ecNumber>
    </recommendedName>
</protein>
<reference key="1">
    <citation type="journal article" date="2002" name="Nucleic Acids Res.">
        <title>Analysis of histone acetyltransferase and histone deacetylase families of Arabidopsis thaliana suggests functional diversification of chromatin modification among multicellular eukaryotes.</title>
        <authorList>
            <person name="Pandey R."/>
            <person name="Mueller A."/>
            <person name="Napoli C.A."/>
            <person name="Selinger D.A."/>
            <person name="Pikaard C.S."/>
            <person name="Richards E.J."/>
            <person name="Bender J."/>
            <person name="Mount D.W."/>
            <person name="Jorgensen R.A."/>
        </authorList>
    </citation>
    <scope>NUCLEOTIDE SEQUENCE [MRNA]</scope>
    <scope>GENE FAMILY</scope>
    <scope>NOMENCLATURE</scope>
</reference>
<reference key="2">
    <citation type="journal article" date="2000" name="Nature">
        <title>Sequence and analysis of chromosome 1 of the plant Arabidopsis thaliana.</title>
        <authorList>
            <person name="Theologis A."/>
            <person name="Ecker J.R."/>
            <person name="Palm C.J."/>
            <person name="Federspiel N.A."/>
            <person name="Kaul S."/>
            <person name="White O."/>
            <person name="Alonso J."/>
            <person name="Altafi H."/>
            <person name="Araujo R."/>
            <person name="Bowman C.L."/>
            <person name="Brooks S.Y."/>
            <person name="Buehler E."/>
            <person name="Chan A."/>
            <person name="Chao Q."/>
            <person name="Chen H."/>
            <person name="Cheuk R.F."/>
            <person name="Chin C.W."/>
            <person name="Chung M.K."/>
            <person name="Conn L."/>
            <person name="Conway A.B."/>
            <person name="Conway A.R."/>
            <person name="Creasy T.H."/>
            <person name="Dewar K."/>
            <person name="Dunn P."/>
            <person name="Etgu P."/>
            <person name="Feldblyum T.V."/>
            <person name="Feng J.-D."/>
            <person name="Fong B."/>
            <person name="Fujii C.Y."/>
            <person name="Gill J.E."/>
            <person name="Goldsmith A.D."/>
            <person name="Haas B."/>
            <person name="Hansen N.F."/>
            <person name="Hughes B."/>
            <person name="Huizar L."/>
            <person name="Hunter J.L."/>
            <person name="Jenkins J."/>
            <person name="Johnson-Hopson C."/>
            <person name="Khan S."/>
            <person name="Khaykin E."/>
            <person name="Kim C.J."/>
            <person name="Koo H.L."/>
            <person name="Kremenetskaia I."/>
            <person name="Kurtz D.B."/>
            <person name="Kwan A."/>
            <person name="Lam B."/>
            <person name="Langin-Hooper S."/>
            <person name="Lee A."/>
            <person name="Lee J.M."/>
            <person name="Lenz C.A."/>
            <person name="Li J.H."/>
            <person name="Li Y.-P."/>
            <person name="Lin X."/>
            <person name="Liu S.X."/>
            <person name="Liu Z.A."/>
            <person name="Luros J.S."/>
            <person name="Maiti R."/>
            <person name="Marziali A."/>
            <person name="Militscher J."/>
            <person name="Miranda M."/>
            <person name="Nguyen M."/>
            <person name="Nierman W.C."/>
            <person name="Osborne B.I."/>
            <person name="Pai G."/>
            <person name="Peterson J."/>
            <person name="Pham P.K."/>
            <person name="Rizzo M."/>
            <person name="Rooney T."/>
            <person name="Rowley D."/>
            <person name="Sakano H."/>
            <person name="Salzberg S.L."/>
            <person name="Schwartz J.R."/>
            <person name="Shinn P."/>
            <person name="Southwick A.M."/>
            <person name="Sun H."/>
            <person name="Tallon L.J."/>
            <person name="Tambunga G."/>
            <person name="Toriumi M.J."/>
            <person name="Town C.D."/>
            <person name="Utterback T."/>
            <person name="Van Aken S."/>
            <person name="Vaysberg M."/>
            <person name="Vysotskaia V.S."/>
            <person name="Walker M."/>
            <person name="Wu D."/>
            <person name="Yu G."/>
            <person name="Fraser C.M."/>
            <person name="Venter J.C."/>
            <person name="Davis R.W."/>
        </authorList>
    </citation>
    <scope>NUCLEOTIDE SEQUENCE [LARGE SCALE GENOMIC DNA]</scope>
    <source>
        <strain>cv. Columbia</strain>
    </source>
</reference>
<reference key="3">
    <citation type="journal article" date="2017" name="Plant J.">
        <title>Araport11: a complete reannotation of the Arabidopsis thaliana reference genome.</title>
        <authorList>
            <person name="Cheng C.Y."/>
            <person name="Krishnakumar V."/>
            <person name="Chan A.P."/>
            <person name="Thibaud-Nissen F."/>
            <person name="Schobel S."/>
            <person name="Town C.D."/>
        </authorList>
    </citation>
    <scope>GENOME REANNOTATION</scope>
    <source>
        <strain>cv. Columbia</strain>
    </source>
</reference>
<reference key="4">
    <citation type="journal article" date="2003" name="Science">
        <title>Empirical analysis of transcriptional activity in the Arabidopsis genome.</title>
        <authorList>
            <person name="Yamada K."/>
            <person name="Lim J."/>
            <person name="Dale J.M."/>
            <person name="Chen H."/>
            <person name="Shinn P."/>
            <person name="Palm C.J."/>
            <person name="Southwick A.M."/>
            <person name="Wu H.C."/>
            <person name="Kim C.J."/>
            <person name="Nguyen M."/>
            <person name="Pham P.K."/>
            <person name="Cheuk R.F."/>
            <person name="Karlin-Newmann G."/>
            <person name="Liu S.X."/>
            <person name="Lam B."/>
            <person name="Sakano H."/>
            <person name="Wu T."/>
            <person name="Yu G."/>
            <person name="Miranda M."/>
            <person name="Quach H.L."/>
            <person name="Tripp M."/>
            <person name="Chang C.H."/>
            <person name="Lee J.M."/>
            <person name="Toriumi M.J."/>
            <person name="Chan M.M."/>
            <person name="Tang C.C."/>
            <person name="Onodera C.S."/>
            <person name="Deng J.M."/>
            <person name="Akiyama K."/>
            <person name="Ansari Y."/>
            <person name="Arakawa T."/>
            <person name="Banh J."/>
            <person name="Banno F."/>
            <person name="Bowser L."/>
            <person name="Brooks S.Y."/>
            <person name="Carninci P."/>
            <person name="Chao Q."/>
            <person name="Choy N."/>
            <person name="Enju A."/>
            <person name="Goldsmith A.D."/>
            <person name="Gurjal M."/>
            <person name="Hansen N.F."/>
            <person name="Hayashizaki Y."/>
            <person name="Johnson-Hopson C."/>
            <person name="Hsuan V.W."/>
            <person name="Iida K."/>
            <person name="Karnes M."/>
            <person name="Khan S."/>
            <person name="Koesema E."/>
            <person name="Ishida J."/>
            <person name="Jiang P.X."/>
            <person name="Jones T."/>
            <person name="Kawai J."/>
            <person name="Kamiya A."/>
            <person name="Meyers C."/>
            <person name="Nakajima M."/>
            <person name="Narusaka M."/>
            <person name="Seki M."/>
            <person name="Sakurai T."/>
            <person name="Satou M."/>
            <person name="Tamse R."/>
            <person name="Vaysberg M."/>
            <person name="Wallender E.K."/>
            <person name="Wong C."/>
            <person name="Yamamura Y."/>
            <person name="Yuan S."/>
            <person name="Shinozaki K."/>
            <person name="Davis R.W."/>
            <person name="Theologis A."/>
            <person name="Ecker J.R."/>
        </authorList>
    </citation>
    <scope>NUCLEOTIDE SEQUENCE [LARGE SCALE MRNA]</scope>
    <source>
        <strain>cv. Columbia</strain>
    </source>
</reference>
<reference key="5">
    <citation type="journal article" date="2012" name="PLoS ONE">
        <title>Subcellular localization of class II HDAs in Arabidopsis thaliana: nucleocytoplasmic shuttling of HDA15 is driven by light.</title>
        <authorList>
            <person name="Alinsug M.V."/>
            <person name="Chen F.F."/>
            <person name="Luo M."/>
            <person name="Tai R."/>
            <person name="Jiang L."/>
            <person name="Wu K."/>
        </authorList>
    </citation>
    <scope>SUBCELLULAR LOCATION</scope>
    <scope>TISSUE SPECIFICITY</scope>
</reference>
<organism>
    <name type="scientific">Arabidopsis thaliana</name>
    <name type="common">Mouse-ear cress</name>
    <dbReference type="NCBI Taxonomy" id="3702"/>
    <lineage>
        <taxon>Eukaryota</taxon>
        <taxon>Viridiplantae</taxon>
        <taxon>Streptophyta</taxon>
        <taxon>Embryophyta</taxon>
        <taxon>Tracheophyta</taxon>
        <taxon>Spermatophyta</taxon>
        <taxon>Magnoliopsida</taxon>
        <taxon>eudicotyledons</taxon>
        <taxon>Gunneridae</taxon>
        <taxon>Pentapetalae</taxon>
        <taxon>rosids</taxon>
        <taxon>malvids</taxon>
        <taxon>Brassicales</taxon>
        <taxon>Brassicaceae</taxon>
        <taxon>Camelineae</taxon>
        <taxon>Arabidopsis</taxon>
    </lineage>
</organism>
<proteinExistence type="evidence at transcript level"/>
<name>HDA8_ARATH</name>
<dbReference type="EC" id="3.5.1.98" evidence="2"/>
<dbReference type="EMBL" id="AF510167">
    <property type="protein sequence ID" value="AAM49769.1"/>
    <property type="molecule type" value="mRNA"/>
</dbReference>
<dbReference type="EMBL" id="AC006932">
    <property type="protein sequence ID" value="AAF22892.1"/>
    <property type="status" value="ALT_SEQ"/>
    <property type="molecule type" value="Genomic_DNA"/>
</dbReference>
<dbReference type="EMBL" id="CP002684">
    <property type="protein sequence ID" value="AEE28294.1"/>
    <property type="molecule type" value="Genomic_DNA"/>
</dbReference>
<dbReference type="EMBL" id="AF410272">
    <property type="protein sequence ID" value="AAK95258.1"/>
    <property type="molecule type" value="mRNA"/>
</dbReference>
<dbReference type="EMBL" id="AF428369">
    <property type="protein sequence ID" value="AAL16299.1"/>
    <property type="status" value="ALT_INIT"/>
    <property type="molecule type" value="mRNA"/>
</dbReference>
<dbReference type="EMBL" id="AY097371">
    <property type="protein sequence ID" value="AAM19887.1"/>
    <property type="molecule type" value="mRNA"/>
</dbReference>
<dbReference type="PIR" id="G86217">
    <property type="entry name" value="G86217"/>
</dbReference>
<dbReference type="RefSeq" id="NP_563817.1">
    <property type="nucleotide sequence ID" value="NM_100719.4"/>
</dbReference>
<dbReference type="SMR" id="Q94EJ2"/>
<dbReference type="BioGRID" id="22607">
    <property type="interactions" value="1"/>
</dbReference>
<dbReference type="FunCoup" id="Q94EJ2">
    <property type="interactions" value="39"/>
</dbReference>
<dbReference type="STRING" id="3702.Q94EJ2"/>
<dbReference type="PaxDb" id="3702-AT1G08460.1"/>
<dbReference type="ProteomicsDB" id="230290"/>
<dbReference type="EnsemblPlants" id="AT1G08460.1">
    <property type="protein sequence ID" value="AT1G08460.1"/>
    <property type="gene ID" value="AT1G08460"/>
</dbReference>
<dbReference type="GeneID" id="837366"/>
<dbReference type="Gramene" id="AT1G08460.1">
    <property type="protein sequence ID" value="AT1G08460.1"/>
    <property type="gene ID" value="AT1G08460"/>
</dbReference>
<dbReference type="KEGG" id="ath:AT1G08460"/>
<dbReference type="Araport" id="AT1G08460"/>
<dbReference type="TAIR" id="AT1G08460">
    <property type="gene designation" value="HDA08"/>
</dbReference>
<dbReference type="eggNOG" id="KOG1343">
    <property type="taxonomic scope" value="Eukaryota"/>
</dbReference>
<dbReference type="HOGENOM" id="CLU_007727_8_2_1"/>
<dbReference type="InParanoid" id="Q94EJ2"/>
<dbReference type="OMA" id="FFQHPFY"/>
<dbReference type="PhylomeDB" id="Q94EJ2"/>
<dbReference type="PRO" id="PR:Q94EJ2"/>
<dbReference type="Proteomes" id="UP000006548">
    <property type="component" value="Chromosome 1"/>
</dbReference>
<dbReference type="ExpressionAtlas" id="Q94EJ2">
    <property type="expression patterns" value="baseline and differential"/>
</dbReference>
<dbReference type="GO" id="GO:0005737">
    <property type="term" value="C:cytoplasm"/>
    <property type="evidence" value="ECO:0000314"/>
    <property type="project" value="UniProtKB"/>
</dbReference>
<dbReference type="GO" id="GO:0005634">
    <property type="term" value="C:nucleus"/>
    <property type="evidence" value="ECO:0000314"/>
    <property type="project" value="UniProtKB"/>
</dbReference>
<dbReference type="GO" id="GO:0141221">
    <property type="term" value="F:histone deacetylase activity, hydrolytic mechanism"/>
    <property type="evidence" value="ECO:0007669"/>
    <property type="project" value="UniProtKB-EC"/>
</dbReference>
<dbReference type="GO" id="GO:0008270">
    <property type="term" value="F:zinc ion binding"/>
    <property type="evidence" value="ECO:0000250"/>
    <property type="project" value="UniProtKB"/>
</dbReference>
<dbReference type="GO" id="GO:0006325">
    <property type="term" value="P:chromatin organization"/>
    <property type="evidence" value="ECO:0007669"/>
    <property type="project" value="UniProtKB-KW"/>
</dbReference>
<dbReference type="CDD" id="cd09996">
    <property type="entry name" value="HDAC_classII_1"/>
    <property type="match status" value="1"/>
</dbReference>
<dbReference type="Gene3D" id="3.40.800.20">
    <property type="entry name" value="Histone deacetylase domain"/>
    <property type="match status" value="1"/>
</dbReference>
<dbReference type="InterPro" id="IPR050284">
    <property type="entry name" value="HDAC_PDAC"/>
</dbReference>
<dbReference type="InterPro" id="IPR000286">
    <property type="entry name" value="His_deacetylse"/>
</dbReference>
<dbReference type="InterPro" id="IPR023801">
    <property type="entry name" value="His_deacetylse_dom"/>
</dbReference>
<dbReference type="InterPro" id="IPR037138">
    <property type="entry name" value="His_deacetylse_dom_sf"/>
</dbReference>
<dbReference type="InterPro" id="IPR023696">
    <property type="entry name" value="Ureohydrolase_dom_sf"/>
</dbReference>
<dbReference type="PANTHER" id="PTHR10625:SF17">
    <property type="entry name" value="HISTONE DEACETYLASE 8"/>
    <property type="match status" value="1"/>
</dbReference>
<dbReference type="PANTHER" id="PTHR10625">
    <property type="entry name" value="HISTONE DEACETYLASE HDAC1-RELATED"/>
    <property type="match status" value="1"/>
</dbReference>
<dbReference type="Pfam" id="PF00850">
    <property type="entry name" value="Hist_deacetyl"/>
    <property type="match status" value="1"/>
</dbReference>
<dbReference type="PRINTS" id="PR01270">
    <property type="entry name" value="HDASUPER"/>
</dbReference>
<dbReference type="SUPFAM" id="SSF52768">
    <property type="entry name" value="Arginase/deacetylase"/>
    <property type="match status" value="1"/>
</dbReference>
<sequence length="377" mass="41263">MVTNRVDVFWHEGMLRHDAVEGVFDTGYDPGFLDVLEKHPENADRVRNMLSILRRGPIAPHVNWFTGLPAIVSELLMFHTSEYIEKLVEADKSGERCEIAAGTFMSPGSWEAALLAAGTTLSAMQHILDCHGKIAYALVRPPGHHSQPTQADGYCFLNNAALAVKLALNSGSCSRVAVIDIDVHYGNGTAEGFYTSDKVLTVSLHMNHGSWGSSHPQKGSIDELGEDVGLGYNLNVPLPNGTGDRGYEYAMNELVVPAVRRFGPDMVVLVVGQDSSAFDPNGRQSLTMNGYRRIGQIMRGVAEEHSHGRLLMVQEGGYHVTYAAYCLHAMLEGVLKIPEPHLSDPIAYYPEEEANAVAAVESIKTYHTEFVPFLRGT</sequence>
<accession>Q94EJ2</accession>
<accession>Q944J5</accession>
<accession>Q9SJE6</accession>
<evidence type="ECO:0000250" key="1">
    <source>
        <dbReference type="UniProtKB" id="Q8GXJ1"/>
    </source>
</evidence>
<evidence type="ECO:0000250" key="2">
    <source>
        <dbReference type="UniProtKB" id="Q8RX28"/>
    </source>
</evidence>
<evidence type="ECO:0000269" key="3">
    <source>
    </source>
</evidence>
<evidence type="ECO:0000303" key="4">
    <source>
    </source>
</evidence>
<evidence type="ECO:0000305" key="5"/>
<evidence type="ECO:0000312" key="6">
    <source>
        <dbReference type="EMBL" id="AAF22892.1"/>
    </source>
</evidence>
<evidence type="ECO:0000312" key="7">
    <source>
        <dbReference type="EMBL" id="AEE28294.1"/>
    </source>
</evidence>
<keyword id="KW-0156">Chromatin regulator</keyword>
<keyword id="KW-0963">Cytoplasm</keyword>
<keyword id="KW-0378">Hydrolase</keyword>
<keyword id="KW-0479">Metal-binding</keyword>
<keyword id="KW-0539">Nucleus</keyword>
<keyword id="KW-1185">Reference proteome</keyword>
<keyword id="KW-0678">Repressor</keyword>
<keyword id="KW-0804">Transcription</keyword>
<keyword id="KW-0805">Transcription regulation</keyword>
<keyword id="KW-0862">Zinc</keyword>